<name>RLMD_FRAT1</name>
<dbReference type="EC" id="2.1.1.190" evidence="1"/>
<dbReference type="EMBL" id="AM286280">
    <property type="protein sequence ID" value="CAL08721.1"/>
    <property type="molecule type" value="Genomic_DNA"/>
</dbReference>
<dbReference type="RefSeq" id="WP_011242253.1">
    <property type="nucleotide sequence ID" value="NC_008245.1"/>
</dbReference>
<dbReference type="SMR" id="Q14IC3"/>
<dbReference type="KEGG" id="ftf:FTF0705"/>
<dbReference type="HOGENOM" id="CLU_014689_8_2_6"/>
<dbReference type="GO" id="GO:0051539">
    <property type="term" value="F:4 iron, 4 sulfur cluster binding"/>
    <property type="evidence" value="ECO:0007669"/>
    <property type="project" value="UniProtKB-KW"/>
</dbReference>
<dbReference type="GO" id="GO:0005506">
    <property type="term" value="F:iron ion binding"/>
    <property type="evidence" value="ECO:0007669"/>
    <property type="project" value="UniProtKB-UniRule"/>
</dbReference>
<dbReference type="GO" id="GO:0003723">
    <property type="term" value="F:RNA binding"/>
    <property type="evidence" value="ECO:0007669"/>
    <property type="project" value="InterPro"/>
</dbReference>
<dbReference type="GO" id="GO:0070041">
    <property type="term" value="F:rRNA (uridine-C5-)-methyltransferase activity"/>
    <property type="evidence" value="ECO:0007669"/>
    <property type="project" value="UniProtKB-UniRule"/>
</dbReference>
<dbReference type="GO" id="GO:0070475">
    <property type="term" value="P:rRNA base methylation"/>
    <property type="evidence" value="ECO:0007669"/>
    <property type="project" value="TreeGrafter"/>
</dbReference>
<dbReference type="CDD" id="cd02440">
    <property type="entry name" value="AdoMet_MTases"/>
    <property type="match status" value="1"/>
</dbReference>
<dbReference type="FunFam" id="2.40.50.140:FF:000097">
    <property type="entry name" value="23S rRNA (uracil(1939)-C(5))-methyltransferase RlmD"/>
    <property type="match status" value="1"/>
</dbReference>
<dbReference type="Gene3D" id="2.40.50.1070">
    <property type="match status" value="1"/>
</dbReference>
<dbReference type="Gene3D" id="2.40.50.140">
    <property type="entry name" value="Nucleic acid-binding proteins"/>
    <property type="match status" value="1"/>
</dbReference>
<dbReference type="Gene3D" id="3.40.50.150">
    <property type="entry name" value="Vaccinia Virus protein VP39"/>
    <property type="match status" value="1"/>
</dbReference>
<dbReference type="HAMAP" id="MF_01010">
    <property type="entry name" value="23SrRNA_methyltr_RlmD"/>
    <property type="match status" value="1"/>
</dbReference>
<dbReference type="InterPro" id="IPR001566">
    <property type="entry name" value="23S_rRNA_MeTrfase_RlmD"/>
</dbReference>
<dbReference type="InterPro" id="IPR030391">
    <property type="entry name" value="MeTrfase_TrmA_CS"/>
</dbReference>
<dbReference type="InterPro" id="IPR012340">
    <property type="entry name" value="NA-bd_OB-fold"/>
</dbReference>
<dbReference type="InterPro" id="IPR029063">
    <property type="entry name" value="SAM-dependent_MTases_sf"/>
</dbReference>
<dbReference type="InterPro" id="IPR002792">
    <property type="entry name" value="TRAM_dom"/>
</dbReference>
<dbReference type="InterPro" id="IPR010280">
    <property type="entry name" value="U5_MeTrfase_fam"/>
</dbReference>
<dbReference type="NCBIfam" id="NF009639">
    <property type="entry name" value="PRK13168.1"/>
    <property type="match status" value="1"/>
</dbReference>
<dbReference type="NCBIfam" id="TIGR00479">
    <property type="entry name" value="rumA"/>
    <property type="match status" value="1"/>
</dbReference>
<dbReference type="PANTHER" id="PTHR11061:SF49">
    <property type="entry name" value="23S RRNA (URACIL(1939)-C(5))-METHYLTRANSFERASE RLMD"/>
    <property type="match status" value="1"/>
</dbReference>
<dbReference type="PANTHER" id="PTHR11061">
    <property type="entry name" value="RNA M5U METHYLTRANSFERASE"/>
    <property type="match status" value="1"/>
</dbReference>
<dbReference type="Pfam" id="PF01938">
    <property type="entry name" value="TRAM"/>
    <property type="match status" value="1"/>
</dbReference>
<dbReference type="Pfam" id="PF05958">
    <property type="entry name" value="tRNA_U5-meth_tr"/>
    <property type="match status" value="1"/>
</dbReference>
<dbReference type="SUPFAM" id="SSF50249">
    <property type="entry name" value="Nucleic acid-binding proteins"/>
    <property type="match status" value="1"/>
</dbReference>
<dbReference type="SUPFAM" id="SSF53335">
    <property type="entry name" value="S-adenosyl-L-methionine-dependent methyltransferases"/>
    <property type="match status" value="1"/>
</dbReference>
<dbReference type="PROSITE" id="PS51687">
    <property type="entry name" value="SAM_MT_RNA_M5U"/>
    <property type="match status" value="1"/>
</dbReference>
<dbReference type="PROSITE" id="PS50926">
    <property type="entry name" value="TRAM"/>
    <property type="match status" value="1"/>
</dbReference>
<dbReference type="PROSITE" id="PS01231">
    <property type="entry name" value="TRMA_2"/>
    <property type="match status" value="1"/>
</dbReference>
<reference key="1">
    <citation type="journal article" date="2007" name="PLoS ONE">
        <title>Genome sequencing shows that European isolates of Francisella tularensis subspecies tularensis are almost identical to US laboratory strain Schu S4.</title>
        <authorList>
            <person name="Chaudhuri R.R."/>
            <person name="Ren C.-P."/>
            <person name="Desmond L."/>
            <person name="Vincent G.A."/>
            <person name="Silman N.J."/>
            <person name="Brehm J.K."/>
            <person name="Elmore M.J."/>
            <person name="Hudson M.J."/>
            <person name="Forsman M."/>
            <person name="Isherwood K.E."/>
            <person name="Gurycova D."/>
            <person name="Minton N.P."/>
            <person name="Titball R.W."/>
            <person name="Pallen M.J."/>
            <person name="Vipond R."/>
        </authorList>
    </citation>
    <scope>NUCLEOTIDE SEQUENCE [LARGE SCALE GENOMIC DNA]</scope>
    <source>
        <strain>FSC 198</strain>
    </source>
</reference>
<sequence>MGRSRHHNKLKEGIFEAEITALSHDGRGIAKVDGKTTFIPFTLPGEVVKFEYTFTKAKFDEAKVVEYVKKSSNRVNPPCDHFQICRGCSLQHMSTDAQIEHKQQTLINQLKYIGNGVEPENILPPLRTSNTEGYRNKARLGVRYVSKKGKILVGFRERNGRFLADIDKCIVLNPLVGDKITEISSFIETLSIYQHIAQLEIAIDDTRPAMIVRHLEPFTNEDLEKLRSFAQENNYWIYLQSKGPDTIFRLYPQGDVEPKKLSYQPAAGIDIGFEPNDFTQVNNDINKKMIKRAIELLDISENDSIIDLFCGLGNFTLPISQHAKTVIGVEGEPTMVKRAKETADNNNITNVNFYAANLFESFEDKEWFNNFEYNKMLLDPPRAGAQEVCNNIEKFNVKRIVYVSCDTAALARDAGILVNTKGYKLISAGVMDMFPHTMHVESIAVFEKI</sequence>
<evidence type="ECO:0000255" key="1">
    <source>
        <dbReference type="HAMAP-Rule" id="MF_01010"/>
    </source>
</evidence>
<protein>
    <recommendedName>
        <fullName evidence="1">23S rRNA (uracil(1939)-C(5))-methyltransferase RlmD</fullName>
        <ecNumber evidence="1">2.1.1.190</ecNumber>
    </recommendedName>
    <alternativeName>
        <fullName evidence="1">23S rRNA(m5U1939)-methyltransferase</fullName>
    </alternativeName>
</protein>
<accession>Q14IC3</accession>
<comment type="function">
    <text evidence="1">Catalyzes the formation of 5-methyl-uridine at position 1939 (m5U1939) in 23S rRNA.</text>
</comment>
<comment type="catalytic activity">
    <reaction evidence="1">
        <text>uridine(1939) in 23S rRNA + S-adenosyl-L-methionine = 5-methyluridine(1939) in 23S rRNA + S-adenosyl-L-homocysteine + H(+)</text>
        <dbReference type="Rhea" id="RHEA:42908"/>
        <dbReference type="Rhea" id="RHEA-COMP:10278"/>
        <dbReference type="Rhea" id="RHEA-COMP:10279"/>
        <dbReference type="ChEBI" id="CHEBI:15378"/>
        <dbReference type="ChEBI" id="CHEBI:57856"/>
        <dbReference type="ChEBI" id="CHEBI:59789"/>
        <dbReference type="ChEBI" id="CHEBI:65315"/>
        <dbReference type="ChEBI" id="CHEBI:74447"/>
        <dbReference type="EC" id="2.1.1.190"/>
    </reaction>
</comment>
<comment type="similarity">
    <text evidence="1">Belongs to the class I-like SAM-binding methyltransferase superfamily. RNA M5U methyltransferase family. RlmD subfamily.</text>
</comment>
<feature type="chain" id="PRO_0000282045" description="23S rRNA (uracil(1939)-C(5))-methyltransferase RlmD">
    <location>
        <begin position="1"/>
        <end position="449"/>
    </location>
</feature>
<feature type="domain" description="TRAM" evidence="1">
    <location>
        <begin position="1"/>
        <end position="66"/>
    </location>
</feature>
<feature type="active site" description="Nucleophile" evidence="1">
    <location>
        <position position="405"/>
    </location>
</feature>
<feature type="binding site" evidence="1">
    <location>
        <position position="79"/>
    </location>
    <ligand>
        <name>[4Fe-4S] cluster</name>
        <dbReference type="ChEBI" id="CHEBI:49883"/>
    </ligand>
</feature>
<feature type="binding site" evidence="1">
    <location>
        <position position="85"/>
    </location>
    <ligand>
        <name>[4Fe-4S] cluster</name>
        <dbReference type="ChEBI" id="CHEBI:49883"/>
    </ligand>
</feature>
<feature type="binding site" evidence="1">
    <location>
        <position position="88"/>
    </location>
    <ligand>
        <name>[4Fe-4S] cluster</name>
        <dbReference type="ChEBI" id="CHEBI:49883"/>
    </ligand>
</feature>
<feature type="binding site" evidence="1">
    <location>
        <position position="169"/>
    </location>
    <ligand>
        <name>[4Fe-4S] cluster</name>
        <dbReference type="ChEBI" id="CHEBI:49883"/>
    </ligand>
</feature>
<feature type="binding site" evidence="1">
    <location>
        <position position="280"/>
    </location>
    <ligand>
        <name>S-adenosyl-L-methionine</name>
        <dbReference type="ChEBI" id="CHEBI:59789"/>
    </ligand>
</feature>
<feature type="binding site" evidence="1">
    <location>
        <position position="309"/>
    </location>
    <ligand>
        <name>S-adenosyl-L-methionine</name>
        <dbReference type="ChEBI" id="CHEBI:59789"/>
    </ligand>
</feature>
<feature type="binding site" evidence="1">
    <location>
        <position position="314"/>
    </location>
    <ligand>
        <name>S-adenosyl-L-methionine</name>
        <dbReference type="ChEBI" id="CHEBI:59789"/>
    </ligand>
</feature>
<feature type="binding site" evidence="1">
    <location>
        <position position="330"/>
    </location>
    <ligand>
        <name>S-adenosyl-L-methionine</name>
        <dbReference type="ChEBI" id="CHEBI:59789"/>
    </ligand>
</feature>
<feature type="binding site" evidence="1">
    <location>
        <position position="357"/>
    </location>
    <ligand>
        <name>S-adenosyl-L-methionine</name>
        <dbReference type="ChEBI" id="CHEBI:59789"/>
    </ligand>
</feature>
<feature type="binding site" evidence="1">
    <location>
        <position position="379"/>
    </location>
    <ligand>
        <name>S-adenosyl-L-methionine</name>
        <dbReference type="ChEBI" id="CHEBI:59789"/>
    </ligand>
</feature>
<proteinExistence type="inferred from homology"/>
<organism>
    <name type="scientific">Francisella tularensis subsp. tularensis (strain FSC 198)</name>
    <dbReference type="NCBI Taxonomy" id="393115"/>
    <lineage>
        <taxon>Bacteria</taxon>
        <taxon>Pseudomonadati</taxon>
        <taxon>Pseudomonadota</taxon>
        <taxon>Gammaproteobacteria</taxon>
        <taxon>Thiotrichales</taxon>
        <taxon>Francisellaceae</taxon>
        <taxon>Francisella</taxon>
    </lineage>
</organism>
<gene>
    <name evidence="1" type="primary">rlmD</name>
    <name type="synonym">rumA</name>
    <name type="ordered locus">FTF0705</name>
</gene>
<keyword id="KW-0004">4Fe-4S</keyword>
<keyword id="KW-0408">Iron</keyword>
<keyword id="KW-0411">Iron-sulfur</keyword>
<keyword id="KW-0479">Metal-binding</keyword>
<keyword id="KW-0489">Methyltransferase</keyword>
<keyword id="KW-0698">rRNA processing</keyword>
<keyword id="KW-0949">S-adenosyl-L-methionine</keyword>
<keyword id="KW-0808">Transferase</keyword>